<gene>
    <name type="ordered locus">MIMI_R791</name>
</gene>
<sequence length="287" mass="33254">MYLNIPTEIWLCILKMDIDSTINLLFTNKYFFDLFEFAKHNFNVLHEVIKRGYVHILKYVDELENLGPLVFIETMNVHDKLKLACNHDQLPIVKYLVETNSNIETINDDVIITASFYGRTNIVEYFIKKDIDNKTIFEALKNACDNGHLETMILLINNGVDIKAKDNFIIKQAISKGHLNIVKYLVENGATIDIEDDTYIINSAQKGYYKMVEYLVYRGADYRTVDDLPIRCALMGGHLDVVKYLQSLGADIEADNESTIDYVFKHGPNESKEYLERYFYWNSLING</sequence>
<protein>
    <recommendedName>
        <fullName>Putative ankyrin repeat protein R791</fullName>
    </recommendedName>
</protein>
<keyword id="KW-0040">ANK repeat</keyword>
<keyword id="KW-1185">Reference proteome</keyword>
<keyword id="KW-0677">Repeat</keyword>
<accession>Q5UQ04</accession>
<feature type="chain" id="PRO_0000067202" description="Putative ankyrin repeat protein R791">
    <location>
        <begin position="1"/>
        <end position="287"/>
    </location>
</feature>
<feature type="repeat" description="ANK 1">
    <location>
        <begin position="40"/>
        <end position="71"/>
    </location>
</feature>
<feature type="repeat" description="ANK 2">
    <location>
        <begin position="76"/>
        <end position="105"/>
    </location>
</feature>
<feature type="repeat" description="ANK 3">
    <location>
        <begin position="107"/>
        <end position="134"/>
    </location>
</feature>
<feature type="repeat" description="ANK 4">
    <location>
        <begin position="135"/>
        <end position="164"/>
    </location>
</feature>
<feature type="repeat" description="ANK 5">
    <location>
        <begin position="165"/>
        <end position="194"/>
    </location>
</feature>
<feature type="repeat" description="ANK 6">
    <location>
        <begin position="196"/>
        <end position="224"/>
    </location>
</feature>
<feature type="repeat" description="ANK 7">
    <location>
        <begin position="225"/>
        <end position="254"/>
    </location>
</feature>
<proteinExistence type="predicted"/>
<organismHost>
    <name type="scientific">Acanthamoeba polyphaga</name>
    <name type="common">Amoeba</name>
    <dbReference type="NCBI Taxonomy" id="5757"/>
</organismHost>
<name>YR791_MIMIV</name>
<dbReference type="EMBL" id="AY653733">
    <property type="protein sequence ID" value="AAV51051.1"/>
    <property type="molecule type" value="Genomic_DNA"/>
</dbReference>
<dbReference type="SMR" id="Q5UQ04"/>
<dbReference type="KEGG" id="vg:9925452"/>
<dbReference type="OrthoDB" id="796at549779"/>
<dbReference type="Proteomes" id="UP000001134">
    <property type="component" value="Genome"/>
</dbReference>
<dbReference type="Gene3D" id="1.25.40.20">
    <property type="entry name" value="Ankyrin repeat-containing domain"/>
    <property type="match status" value="1"/>
</dbReference>
<dbReference type="InterPro" id="IPR002110">
    <property type="entry name" value="Ankyrin_rpt"/>
</dbReference>
<dbReference type="InterPro" id="IPR036770">
    <property type="entry name" value="Ankyrin_rpt-contain_sf"/>
</dbReference>
<dbReference type="PANTHER" id="PTHR24188">
    <property type="entry name" value="ANKYRIN REPEAT PROTEIN"/>
    <property type="match status" value="1"/>
</dbReference>
<dbReference type="PANTHER" id="PTHR24188:SF29">
    <property type="entry name" value="GH09064P"/>
    <property type="match status" value="1"/>
</dbReference>
<dbReference type="Pfam" id="PF12796">
    <property type="entry name" value="Ank_2"/>
    <property type="match status" value="2"/>
</dbReference>
<dbReference type="SMART" id="SM00248">
    <property type="entry name" value="ANK"/>
    <property type="match status" value="6"/>
</dbReference>
<dbReference type="SUPFAM" id="SSF48403">
    <property type="entry name" value="Ankyrin repeat"/>
    <property type="match status" value="1"/>
</dbReference>
<dbReference type="PROSITE" id="PS50297">
    <property type="entry name" value="ANK_REP_REGION"/>
    <property type="match status" value="2"/>
</dbReference>
<dbReference type="PROSITE" id="PS50088">
    <property type="entry name" value="ANK_REPEAT"/>
    <property type="match status" value="2"/>
</dbReference>
<reference key="1">
    <citation type="journal article" date="2004" name="Science">
        <title>The 1.2-megabase genome sequence of Mimivirus.</title>
        <authorList>
            <person name="Raoult D."/>
            <person name="Audic S."/>
            <person name="Robert C."/>
            <person name="Abergel C."/>
            <person name="Renesto P."/>
            <person name="Ogata H."/>
            <person name="La Scola B."/>
            <person name="Susan M."/>
            <person name="Claverie J.-M."/>
        </authorList>
    </citation>
    <scope>NUCLEOTIDE SEQUENCE [LARGE SCALE GENOMIC DNA]</scope>
    <source>
        <strain>Rowbotham-Bradford</strain>
    </source>
</reference>
<organism>
    <name type="scientific">Acanthamoeba polyphaga mimivirus</name>
    <name type="common">APMV</name>
    <dbReference type="NCBI Taxonomy" id="212035"/>
    <lineage>
        <taxon>Viruses</taxon>
        <taxon>Varidnaviria</taxon>
        <taxon>Bamfordvirae</taxon>
        <taxon>Nucleocytoviricota</taxon>
        <taxon>Megaviricetes</taxon>
        <taxon>Imitervirales</taxon>
        <taxon>Mimiviridae</taxon>
        <taxon>Megamimivirinae</taxon>
        <taxon>Mimivirus</taxon>
        <taxon>Mimivirus bradfordmassiliense</taxon>
    </lineage>
</organism>